<protein>
    <recommendedName>
        <fullName>Cytotoxin homolog 2</fullName>
    </recommendedName>
    <alternativeName>
        <fullName evidence="5">Cytotoxin homolog V-II-2/V-II-3</fullName>
    </alternativeName>
</protein>
<organism>
    <name type="scientific">Naja melanoleuca</name>
    <name type="common">Forest cobra</name>
    <name type="synonym">Black-lipped cobra</name>
    <dbReference type="NCBI Taxonomy" id="8643"/>
    <lineage>
        <taxon>Eukaryota</taxon>
        <taxon>Metazoa</taxon>
        <taxon>Chordata</taxon>
        <taxon>Craniata</taxon>
        <taxon>Vertebrata</taxon>
        <taxon>Euteleostomi</taxon>
        <taxon>Lepidosauria</taxon>
        <taxon>Squamata</taxon>
        <taxon>Bifurcata</taxon>
        <taxon>Unidentata</taxon>
        <taxon>Episquamata</taxon>
        <taxon>Toxicofera</taxon>
        <taxon>Serpentes</taxon>
        <taxon>Colubroidea</taxon>
        <taxon>Elapidae</taxon>
        <taxon>Elapinae</taxon>
        <taxon>Naja</taxon>
    </lineage>
</organism>
<feature type="chain" id="PRO_0000093503" description="Cytotoxin homolog 2" evidence="4">
    <location>
        <begin position="1"/>
        <end position="61"/>
    </location>
</feature>
<feature type="disulfide bond" evidence="2">
    <location>
        <begin position="3"/>
        <end position="22"/>
    </location>
</feature>
<feature type="disulfide bond" evidence="2">
    <location>
        <begin position="15"/>
        <end position="39"/>
    </location>
</feature>
<feature type="disulfide bond" evidence="2">
    <location>
        <begin position="43"/>
        <end position="54"/>
    </location>
</feature>
<feature type="disulfide bond" evidence="2">
    <location>
        <begin position="55"/>
        <end position="60"/>
    </location>
</feature>
<feature type="sequence variant" description="In V-II-3.">
    <original>N</original>
    <variation>K</variation>
    <location>
        <position position="36"/>
    </location>
</feature>
<proteinExistence type="evidence at protein level"/>
<sequence length="61" mass="6850">IKCHNTLLPFIYKTCPEGQNLCFKGTLKFPKKTTYNRGCAATCPKSSLLVKYVCCNTNKCN</sequence>
<evidence type="ECO:0000250" key="1">
    <source>
        <dbReference type="UniProtKB" id="P14541"/>
    </source>
</evidence>
<evidence type="ECO:0000250" key="2">
    <source>
        <dbReference type="UniProtKB" id="P60301"/>
    </source>
</evidence>
<evidence type="ECO:0000250" key="3">
    <source>
        <dbReference type="UniProtKB" id="P62375"/>
    </source>
</evidence>
<evidence type="ECO:0000269" key="4">
    <source>
    </source>
</evidence>
<evidence type="ECO:0000303" key="5">
    <source>
    </source>
</evidence>
<evidence type="ECO:0000305" key="6"/>
<evidence type="ECO:0000305" key="7">
    <source>
    </source>
</evidence>
<keyword id="KW-0903">Direct protein sequencing</keyword>
<keyword id="KW-1015">Disulfide bond</keyword>
<keyword id="KW-0472">Membrane</keyword>
<keyword id="KW-0964">Secreted</keyword>
<keyword id="KW-1052">Target cell membrane</keyword>
<keyword id="KW-1053">Target membrane</keyword>
<keyword id="KW-0800">Toxin</keyword>
<dbReference type="PIR" id="A01734">
    <property type="entry name" value="H3NJ2W"/>
</dbReference>
<dbReference type="SMR" id="P01474"/>
<dbReference type="GO" id="GO:0005576">
    <property type="term" value="C:extracellular region"/>
    <property type="evidence" value="ECO:0007669"/>
    <property type="project" value="UniProtKB-SubCell"/>
</dbReference>
<dbReference type="GO" id="GO:0016020">
    <property type="term" value="C:membrane"/>
    <property type="evidence" value="ECO:0007669"/>
    <property type="project" value="UniProtKB-KW"/>
</dbReference>
<dbReference type="GO" id="GO:0044218">
    <property type="term" value="C:other organism cell membrane"/>
    <property type="evidence" value="ECO:0007669"/>
    <property type="project" value="UniProtKB-KW"/>
</dbReference>
<dbReference type="GO" id="GO:0090729">
    <property type="term" value="F:toxin activity"/>
    <property type="evidence" value="ECO:0007669"/>
    <property type="project" value="UniProtKB-KW"/>
</dbReference>
<dbReference type="CDD" id="cd00206">
    <property type="entry name" value="TFP_snake_toxin"/>
    <property type="match status" value="1"/>
</dbReference>
<dbReference type="FunFam" id="2.10.60.10:FF:000024">
    <property type="entry name" value="Cytotoxin 1"/>
    <property type="match status" value="1"/>
</dbReference>
<dbReference type="Gene3D" id="2.10.60.10">
    <property type="entry name" value="CD59"/>
    <property type="match status" value="1"/>
</dbReference>
<dbReference type="InterPro" id="IPR003572">
    <property type="entry name" value="Cytotoxin_Cobra"/>
</dbReference>
<dbReference type="InterPro" id="IPR003571">
    <property type="entry name" value="Snake_3FTx"/>
</dbReference>
<dbReference type="InterPro" id="IPR045860">
    <property type="entry name" value="Snake_toxin-like_sf"/>
</dbReference>
<dbReference type="InterPro" id="IPR018354">
    <property type="entry name" value="Snake_toxin_con_site"/>
</dbReference>
<dbReference type="InterPro" id="IPR054131">
    <property type="entry name" value="Toxin_cobra-type"/>
</dbReference>
<dbReference type="Pfam" id="PF21947">
    <property type="entry name" value="Toxin_cobra-type"/>
    <property type="match status" value="1"/>
</dbReference>
<dbReference type="PRINTS" id="PR00282">
    <property type="entry name" value="CYTOTOXIN"/>
</dbReference>
<dbReference type="SUPFAM" id="SSF57302">
    <property type="entry name" value="Snake toxin-like"/>
    <property type="match status" value="1"/>
</dbReference>
<dbReference type="PROSITE" id="PS00272">
    <property type="entry name" value="SNAKE_TOXIN"/>
    <property type="match status" value="1"/>
</dbReference>
<reference key="1">
    <citation type="journal article" date="1974" name="Biochem. Biophys. Res. Commun.">
        <title>Snake venom toxins. The primary structures of two novel cytotoxin homologues from the venom of forest cobra (Naja melanoleuca).</title>
        <authorList>
            <person name="Carlsson F.H.H."/>
        </authorList>
    </citation>
    <scope>PROTEIN SEQUENCE</scope>
    <scope>TOXIC DOSE</scope>
    <scope>SUBCELLULAR LOCATION</scope>
    <source>
        <tissue>Venom</tissue>
    </source>
</reference>
<accession>P01474</accession>
<comment type="function">
    <text evidence="1">Has low cytotoxic activity.</text>
</comment>
<comment type="subcellular location">
    <subcellularLocation>
        <location evidence="4">Secreted</location>
    </subcellularLocation>
    <subcellularLocation>
        <location evidence="3">Target cell membrane</location>
    </subcellularLocation>
</comment>
<comment type="tissue specificity">
    <text evidence="6">Expressed by the venom gland.</text>
</comment>
<comment type="toxic dose">
    <text evidence="4">LD(50) is 6.25 mg/kg by intravenous injection.</text>
</comment>
<comment type="miscellaneous">
    <text evidence="7">These two sequences have Gly and Leu at positions 25 and 27, respectively, instead of 2 Met that are found in most cytotoxins. The low toxicity of these 2 proteins may possibly be correlated with these changes.</text>
</comment>
<comment type="miscellaneous">
    <text evidence="6">Is classified as a P-type cytotoxin, since a proline residue stands at position 30 (Pro-31 in standard classification).</text>
</comment>
<comment type="similarity">
    <text evidence="6">Belongs to the three-finger toxin family. Short-chain subfamily. Orphan group XV sub-subfamily.</text>
</comment>
<name>3SOF2_NAJME</name>